<comment type="function">
    <text evidence="1">The RuvA-RuvB-RuvC complex processes Holliday junction (HJ) DNA during genetic recombination and DNA repair, while the RuvA-RuvB complex plays an important role in the rescue of blocked DNA replication forks via replication fork reversal (RFR). RuvA specifically binds to HJ cruciform DNA, conferring on it an open structure. The RuvB hexamer acts as an ATP-dependent pump, pulling dsDNA into and through the RuvAB complex. RuvB forms 2 homohexamers on either side of HJ DNA bound by 1 or 2 RuvA tetramers; 4 subunits per hexamer contact DNA at a time. Coordinated motions by a converter formed by DNA-disengaged RuvB subunits stimulates ATP hydrolysis and nucleotide exchange. Immobilization of the converter enables RuvB to convert the ATP-contained energy into a lever motion, pulling 2 nucleotides of DNA out of the RuvA tetramer per ATP hydrolyzed, thus driving DNA branch migration. The RuvB motors rotate together with the DNA substrate, which together with the progressing nucleotide cycle form the mechanistic basis for DNA recombination by continuous HJ branch migration. Branch migration allows RuvC to scan DNA until it finds its consensus sequence, where it cleaves and resolves cruciform DNA.</text>
</comment>
<comment type="catalytic activity">
    <reaction evidence="1">
        <text>ATP + H2O = ADP + phosphate + H(+)</text>
        <dbReference type="Rhea" id="RHEA:13065"/>
        <dbReference type="ChEBI" id="CHEBI:15377"/>
        <dbReference type="ChEBI" id="CHEBI:15378"/>
        <dbReference type="ChEBI" id="CHEBI:30616"/>
        <dbReference type="ChEBI" id="CHEBI:43474"/>
        <dbReference type="ChEBI" id="CHEBI:456216"/>
    </reaction>
</comment>
<comment type="subunit">
    <text evidence="1">Homohexamer. Forms an RuvA(8)-RuvB(12)-Holliday junction (HJ) complex. HJ DNA is sandwiched between 2 RuvA tetramers; dsDNA enters through RuvA and exits via RuvB. An RuvB hexamer assembles on each DNA strand where it exits the tetramer. Each RuvB hexamer is contacted by two RuvA subunits (via domain III) on 2 adjacent RuvB subunits; this complex drives branch migration. In the full resolvosome a probable DNA-RuvA(4)-RuvB(12)-RuvC(2) complex forms which resolves the HJ.</text>
</comment>
<comment type="subcellular location">
    <subcellularLocation>
        <location evidence="1">Cytoplasm</location>
    </subcellularLocation>
</comment>
<comment type="domain">
    <text evidence="1">Has 3 domains, the large (RuvB-L) and small ATPase (RuvB-S) domains and the C-terminal head (RuvB-H) domain. The head domain binds DNA, while the ATPase domains jointly bind ATP, ADP or are empty depending on the state of the subunit in the translocation cycle. During a single DNA translocation step the structure of each domain remains the same, but their relative positions change.</text>
</comment>
<comment type="similarity">
    <text evidence="1">Belongs to the RuvB family.</text>
</comment>
<sequence length="345" mass="38972">MQRLVEVESVSFEEDNNEISLRPSNWDDYIGQEKIKKNLRVFIDASKKRKEALDHILFYGPPGLGKTTLSYLISNEMNTNIKVTAGPMIEKSGDLAAILTNLEEGDILFIDEIHRLSPAVEEILYPAMEDYRLDIIIGSGPAAQTVKIDLPRFTLIGATTRAGMLSNPLRERFGMHFRMQFYTEIELAKIIQKASLKLGKNCEDDASLEISKRSRGTPRVALRLLRRVRDFSEVENEKSIHLQRCKYALDELGVNESGFDEMDINLLELLISNRGKPMGLSTIAAALSEDEGTIEDAIEPYLLANGYIERTARGRVASVKTYEMFRLSYPTSLKLEDDLTQGKLF</sequence>
<evidence type="ECO:0000255" key="1">
    <source>
        <dbReference type="HAMAP-Rule" id="MF_00016"/>
    </source>
</evidence>
<proteinExistence type="inferred from homology"/>
<accession>A8EVP9</accession>
<dbReference type="EC" id="3.6.4.-" evidence="1"/>
<dbReference type="EMBL" id="CP000361">
    <property type="protein sequence ID" value="ABV68022.1"/>
    <property type="molecule type" value="Genomic_DNA"/>
</dbReference>
<dbReference type="RefSeq" id="WP_012147741.1">
    <property type="nucleotide sequence ID" value="NC_009850.1"/>
</dbReference>
<dbReference type="SMR" id="A8EVP9"/>
<dbReference type="STRING" id="367737.Abu_1776"/>
<dbReference type="GeneID" id="24304676"/>
<dbReference type="KEGG" id="abu:Abu_1776"/>
<dbReference type="eggNOG" id="COG2255">
    <property type="taxonomic scope" value="Bacteria"/>
</dbReference>
<dbReference type="HOGENOM" id="CLU_055599_1_0_7"/>
<dbReference type="Proteomes" id="UP000001136">
    <property type="component" value="Chromosome"/>
</dbReference>
<dbReference type="GO" id="GO:0005737">
    <property type="term" value="C:cytoplasm"/>
    <property type="evidence" value="ECO:0007669"/>
    <property type="project" value="UniProtKB-SubCell"/>
</dbReference>
<dbReference type="GO" id="GO:0048476">
    <property type="term" value="C:Holliday junction resolvase complex"/>
    <property type="evidence" value="ECO:0007669"/>
    <property type="project" value="UniProtKB-UniRule"/>
</dbReference>
<dbReference type="GO" id="GO:0005524">
    <property type="term" value="F:ATP binding"/>
    <property type="evidence" value="ECO:0007669"/>
    <property type="project" value="UniProtKB-UniRule"/>
</dbReference>
<dbReference type="GO" id="GO:0016887">
    <property type="term" value="F:ATP hydrolysis activity"/>
    <property type="evidence" value="ECO:0007669"/>
    <property type="project" value="InterPro"/>
</dbReference>
<dbReference type="GO" id="GO:0000400">
    <property type="term" value="F:four-way junction DNA binding"/>
    <property type="evidence" value="ECO:0007669"/>
    <property type="project" value="UniProtKB-UniRule"/>
</dbReference>
<dbReference type="GO" id="GO:0009378">
    <property type="term" value="F:four-way junction helicase activity"/>
    <property type="evidence" value="ECO:0007669"/>
    <property type="project" value="InterPro"/>
</dbReference>
<dbReference type="GO" id="GO:0006310">
    <property type="term" value="P:DNA recombination"/>
    <property type="evidence" value="ECO:0007669"/>
    <property type="project" value="UniProtKB-UniRule"/>
</dbReference>
<dbReference type="GO" id="GO:0006281">
    <property type="term" value="P:DNA repair"/>
    <property type="evidence" value="ECO:0007669"/>
    <property type="project" value="UniProtKB-UniRule"/>
</dbReference>
<dbReference type="CDD" id="cd00009">
    <property type="entry name" value="AAA"/>
    <property type="match status" value="1"/>
</dbReference>
<dbReference type="Gene3D" id="1.10.8.60">
    <property type="match status" value="1"/>
</dbReference>
<dbReference type="Gene3D" id="3.40.50.300">
    <property type="entry name" value="P-loop containing nucleotide triphosphate hydrolases"/>
    <property type="match status" value="1"/>
</dbReference>
<dbReference type="Gene3D" id="1.10.10.10">
    <property type="entry name" value="Winged helix-like DNA-binding domain superfamily/Winged helix DNA-binding domain"/>
    <property type="match status" value="1"/>
</dbReference>
<dbReference type="HAMAP" id="MF_00016">
    <property type="entry name" value="DNA_HJ_migration_RuvB"/>
    <property type="match status" value="1"/>
</dbReference>
<dbReference type="InterPro" id="IPR003593">
    <property type="entry name" value="AAA+_ATPase"/>
</dbReference>
<dbReference type="InterPro" id="IPR041445">
    <property type="entry name" value="AAA_lid_4"/>
</dbReference>
<dbReference type="InterPro" id="IPR004605">
    <property type="entry name" value="DNA_helicase_Holl-junc_RuvB"/>
</dbReference>
<dbReference type="InterPro" id="IPR027417">
    <property type="entry name" value="P-loop_NTPase"/>
</dbReference>
<dbReference type="InterPro" id="IPR008824">
    <property type="entry name" value="RuvB-like_N"/>
</dbReference>
<dbReference type="InterPro" id="IPR008823">
    <property type="entry name" value="RuvB_C"/>
</dbReference>
<dbReference type="InterPro" id="IPR036388">
    <property type="entry name" value="WH-like_DNA-bd_sf"/>
</dbReference>
<dbReference type="InterPro" id="IPR036390">
    <property type="entry name" value="WH_DNA-bd_sf"/>
</dbReference>
<dbReference type="NCBIfam" id="NF000868">
    <property type="entry name" value="PRK00080.1"/>
    <property type="match status" value="1"/>
</dbReference>
<dbReference type="NCBIfam" id="TIGR00635">
    <property type="entry name" value="ruvB"/>
    <property type="match status" value="1"/>
</dbReference>
<dbReference type="PANTHER" id="PTHR42848">
    <property type="match status" value="1"/>
</dbReference>
<dbReference type="PANTHER" id="PTHR42848:SF1">
    <property type="entry name" value="HOLLIDAY JUNCTION BRANCH MIGRATION COMPLEX SUBUNIT RUVB"/>
    <property type="match status" value="1"/>
</dbReference>
<dbReference type="Pfam" id="PF17864">
    <property type="entry name" value="AAA_lid_4"/>
    <property type="match status" value="1"/>
</dbReference>
<dbReference type="Pfam" id="PF05491">
    <property type="entry name" value="RuvB_C"/>
    <property type="match status" value="1"/>
</dbReference>
<dbReference type="Pfam" id="PF05496">
    <property type="entry name" value="RuvB_N"/>
    <property type="match status" value="1"/>
</dbReference>
<dbReference type="SMART" id="SM00382">
    <property type="entry name" value="AAA"/>
    <property type="match status" value="1"/>
</dbReference>
<dbReference type="SUPFAM" id="SSF52540">
    <property type="entry name" value="P-loop containing nucleoside triphosphate hydrolases"/>
    <property type="match status" value="1"/>
</dbReference>
<dbReference type="SUPFAM" id="SSF46785">
    <property type="entry name" value="Winged helix' DNA-binding domain"/>
    <property type="match status" value="1"/>
</dbReference>
<organism>
    <name type="scientific">Aliarcobacter butzleri (strain RM4018)</name>
    <name type="common">Arcobacter butzleri</name>
    <dbReference type="NCBI Taxonomy" id="367737"/>
    <lineage>
        <taxon>Bacteria</taxon>
        <taxon>Pseudomonadati</taxon>
        <taxon>Campylobacterota</taxon>
        <taxon>Epsilonproteobacteria</taxon>
        <taxon>Campylobacterales</taxon>
        <taxon>Arcobacteraceae</taxon>
        <taxon>Aliarcobacter</taxon>
    </lineage>
</organism>
<keyword id="KW-0067">ATP-binding</keyword>
<keyword id="KW-0963">Cytoplasm</keyword>
<keyword id="KW-0227">DNA damage</keyword>
<keyword id="KW-0233">DNA recombination</keyword>
<keyword id="KW-0234">DNA repair</keyword>
<keyword id="KW-0238">DNA-binding</keyword>
<keyword id="KW-0378">Hydrolase</keyword>
<keyword id="KW-0547">Nucleotide-binding</keyword>
<keyword id="KW-1185">Reference proteome</keyword>
<reference key="1">
    <citation type="journal article" date="2007" name="PLoS ONE">
        <title>The complete genome sequence and analysis of the Epsilonproteobacterium Arcobacter butzleri.</title>
        <authorList>
            <person name="Miller W.G."/>
            <person name="Parker C.T."/>
            <person name="Rubenfield M."/>
            <person name="Mendz G.L."/>
            <person name="Woesten M.M.S.M."/>
            <person name="Ussery D.W."/>
            <person name="Stolz J.F."/>
            <person name="Binnewies T.T."/>
            <person name="Hallin P.F."/>
            <person name="Wang G."/>
            <person name="Malek J.A."/>
            <person name="Rogosin A."/>
            <person name="Stanker L.H."/>
            <person name="Mandrell R.E."/>
        </authorList>
    </citation>
    <scope>NUCLEOTIDE SEQUENCE [LARGE SCALE GENOMIC DNA]</scope>
    <source>
        <strain>RM4018</strain>
    </source>
</reference>
<name>RUVB_ALIB4</name>
<gene>
    <name evidence="1" type="primary">ruvB</name>
    <name type="ordered locus">Abu_1776</name>
</gene>
<feature type="chain" id="PRO_1000057138" description="Holliday junction branch migration complex subunit RuvB">
    <location>
        <begin position="1"/>
        <end position="345"/>
    </location>
</feature>
<feature type="region of interest" description="Large ATPase domain (RuvB-L)" evidence="1">
    <location>
        <begin position="1"/>
        <end position="182"/>
    </location>
</feature>
<feature type="region of interest" description="Small ATPAse domain (RuvB-S)" evidence="1">
    <location>
        <begin position="183"/>
        <end position="253"/>
    </location>
</feature>
<feature type="region of interest" description="Head domain (RuvB-H)" evidence="1">
    <location>
        <begin position="256"/>
        <end position="345"/>
    </location>
</feature>
<feature type="binding site" evidence="1">
    <location>
        <position position="21"/>
    </location>
    <ligand>
        <name>ATP</name>
        <dbReference type="ChEBI" id="CHEBI:30616"/>
    </ligand>
</feature>
<feature type="binding site" evidence="1">
    <location>
        <position position="22"/>
    </location>
    <ligand>
        <name>ATP</name>
        <dbReference type="ChEBI" id="CHEBI:30616"/>
    </ligand>
</feature>
<feature type="binding site" evidence="1">
    <location>
        <position position="63"/>
    </location>
    <ligand>
        <name>ATP</name>
        <dbReference type="ChEBI" id="CHEBI:30616"/>
    </ligand>
</feature>
<feature type="binding site" evidence="1">
    <location>
        <position position="66"/>
    </location>
    <ligand>
        <name>ATP</name>
        <dbReference type="ChEBI" id="CHEBI:30616"/>
    </ligand>
</feature>
<feature type="binding site" evidence="1">
    <location>
        <position position="67"/>
    </location>
    <ligand>
        <name>ATP</name>
        <dbReference type="ChEBI" id="CHEBI:30616"/>
    </ligand>
</feature>
<feature type="binding site" evidence="1">
    <location>
        <position position="67"/>
    </location>
    <ligand>
        <name>Mg(2+)</name>
        <dbReference type="ChEBI" id="CHEBI:18420"/>
    </ligand>
</feature>
<feature type="binding site" evidence="1">
    <location>
        <position position="68"/>
    </location>
    <ligand>
        <name>ATP</name>
        <dbReference type="ChEBI" id="CHEBI:30616"/>
    </ligand>
</feature>
<feature type="binding site" evidence="1">
    <location>
        <begin position="129"/>
        <end position="131"/>
    </location>
    <ligand>
        <name>ATP</name>
        <dbReference type="ChEBI" id="CHEBI:30616"/>
    </ligand>
</feature>
<feature type="binding site" evidence="1">
    <location>
        <position position="172"/>
    </location>
    <ligand>
        <name>ATP</name>
        <dbReference type="ChEBI" id="CHEBI:30616"/>
    </ligand>
</feature>
<feature type="binding site" evidence="1">
    <location>
        <position position="182"/>
    </location>
    <ligand>
        <name>ATP</name>
        <dbReference type="ChEBI" id="CHEBI:30616"/>
    </ligand>
</feature>
<feature type="binding site" evidence="1">
    <location>
        <position position="219"/>
    </location>
    <ligand>
        <name>ATP</name>
        <dbReference type="ChEBI" id="CHEBI:30616"/>
    </ligand>
</feature>
<feature type="binding site" evidence="1">
    <location>
        <position position="310"/>
    </location>
    <ligand>
        <name>DNA</name>
        <dbReference type="ChEBI" id="CHEBI:16991"/>
    </ligand>
</feature>
<feature type="binding site" evidence="1">
    <location>
        <position position="315"/>
    </location>
    <ligand>
        <name>DNA</name>
        <dbReference type="ChEBI" id="CHEBI:16991"/>
    </ligand>
</feature>
<protein>
    <recommendedName>
        <fullName evidence="1">Holliday junction branch migration complex subunit RuvB</fullName>
        <ecNumber evidence="1">3.6.4.-</ecNumber>
    </recommendedName>
</protein>